<dbReference type="EC" id="2.1.1.166" evidence="1"/>
<dbReference type="EMBL" id="CP000780">
    <property type="protein sequence ID" value="ABS55909.1"/>
    <property type="molecule type" value="Genomic_DNA"/>
</dbReference>
<dbReference type="RefSeq" id="WP_012106942.1">
    <property type="nucleotide sequence ID" value="NC_009712.1"/>
</dbReference>
<dbReference type="SMR" id="A7I848"/>
<dbReference type="STRING" id="456442.Mboo_1391"/>
<dbReference type="GeneID" id="5410953"/>
<dbReference type="KEGG" id="mbn:Mboo_1391"/>
<dbReference type="eggNOG" id="arCOG00079">
    <property type="taxonomic scope" value="Archaea"/>
</dbReference>
<dbReference type="HOGENOM" id="CLU_009422_4_0_2"/>
<dbReference type="OrthoDB" id="26307at2157"/>
<dbReference type="Proteomes" id="UP000002408">
    <property type="component" value="Chromosome"/>
</dbReference>
<dbReference type="GO" id="GO:0005737">
    <property type="term" value="C:cytoplasm"/>
    <property type="evidence" value="ECO:0007669"/>
    <property type="project" value="UniProtKB-SubCell"/>
</dbReference>
<dbReference type="GO" id="GO:0008650">
    <property type="term" value="F:rRNA (uridine-2'-O-)-methyltransferase activity"/>
    <property type="evidence" value="ECO:0007669"/>
    <property type="project" value="UniProtKB-UniRule"/>
</dbReference>
<dbReference type="Gene3D" id="3.40.50.150">
    <property type="entry name" value="Vaccinia Virus protein VP39"/>
    <property type="match status" value="1"/>
</dbReference>
<dbReference type="HAMAP" id="MF_01547">
    <property type="entry name" value="RNA_methyltr_E"/>
    <property type="match status" value="1"/>
</dbReference>
<dbReference type="InterPro" id="IPR050082">
    <property type="entry name" value="RNA_methyltr_RlmE"/>
</dbReference>
<dbReference type="InterPro" id="IPR002877">
    <property type="entry name" value="RNA_MeTrfase_FtsJ_dom"/>
</dbReference>
<dbReference type="InterPro" id="IPR015507">
    <property type="entry name" value="rRNA-MeTfrase_E"/>
</dbReference>
<dbReference type="InterPro" id="IPR029063">
    <property type="entry name" value="SAM-dependent_MTases_sf"/>
</dbReference>
<dbReference type="PANTHER" id="PTHR10920:SF13">
    <property type="entry name" value="PRE-RRNA 2'-O-RIBOSE RNA METHYLTRANSFERASE FTSJ3"/>
    <property type="match status" value="1"/>
</dbReference>
<dbReference type="PANTHER" id="PTHR10920">
    <property type="entry name" value="RIBOSOMAL RNA METHYLTRANSFERASE"/>
    <property type="match status" value="1"/>
</dbReference>
<dbReference type="Pfam" id="PF01728">
    <property type="entry name" value="FtsJ"/>
    <property type="match status" value="1"/>
</dbReference>
<dbReference type="PIRSF" id="PIRSF005461">
    <property type="entry name" value="23S_rRNA_mtase"/>
    <property type="match status" value="1"/>
</dbReference>
<dbReference type="SUPFAM" id="SSF53335">
    <property type="entry name" value="S-adenosyl-L-methionine-dependent methyltransferases"/>
    <property type="match status" value="1"/>
</dbReference>
<sequence>MGSQWSRDKVYLRAKHEGFRSRASYKLIEIQEKFAVIRRDDNIIDLGAAPGSWLQVLRTLTDGRVLGIDLNPIADIEGIETLEGDLTDPVVQKQAKEMLGTVCIVVCDAAPKLSGHKSYDQARAIALGEEALLFACNVLKPGGNFVIKSFQGADFPELLAAIQGQFYAVKTYSTKATRKGSTEIYIIAKNFKG</sequence>
<keyword id="KW-0963">Cytoplasm</keyword>
<keyword id="KW-0489">Methyltransferase</keyword>
<keyword id="KW-1185">Reference proteome</keyword>
<keyword id="KW-0698">rRNA processing</keyword>
<keyword id="KW-0949">S-adenosyl-L-methionine</keyword>
<keyword id="KW-0808">Transferase</keyword>
<evidence type="ECO:0000255" key="1">
    <source>
        <dbReference type="HAMAP-Rule" id="MF_01547"/>
    </source>
</evidence>
<organism>
    <name type="scientific">Methanoregula boonei (strain DSM 21154 / JCM 14090 / 6A8)</name>
    <dbReference type="NCBI Taxonomy" id="456442"/>
    <lineage>
        <taxon>Archaea</taxon>
        <taxon>Methanobacteriati</taxon>
        <taxon>Methanobacteriota</taxon>
        <taxon>Stenosarchaea group</taxon>
        <taxon>Methanomicrobia</taxon>
        <taxon>Methanomicrobiales</taxon>
        <taxon>Methanoregulaceae</taxon>
        <taxon>Methanoregula</taxon>
    </lineage>
</organism>
<feature type="chain" id="PRO_1000087691" description="Ribosomal RNA large subunit methyltransferase E">
    <location>
        <begin position="1"/>
        <end position="193"/>
    </location>
</feature>
<feature type="active site" description="Proton acceptor" evidence="1">
    <location>
        <position position="148"/>
    </location>
</feature>
<feature type="binding site" evidence="1">
    <location>
        <position position="51"/>
    </location>
    <ligand>
        <name>S-adenosyl-L-methionine</name>
        <dbReference type="ChEBI" id="CHEBI:59789"/>
    </ligand>
</feature>
<feature type="binding site" evidence="1">
    <location>
        <position position="53"/>
    </location>
    <ligand>
        <name>S-adenosyl-L-methionine</name>
        <dbReference type="ChEBI" id="CHEBI:59789"/>
    </ligand>
</feature>
<feature type="binding site" evidence="1">
    <location>
        <position position="69"/>
    </location>
    <ligand>
        <name>S-adenosyl-L-methionine</name>
        <dbReference type="ChEBI" id="CHEBI:59789"/>
    </ligand>
</feature>
<feature type="binding site" evidence="1">
    <location>
        <position position="85"/>
    </location>
    <ligand>
        <name>S-adenosyl-L-methionine</name>
        <dbReference type="ChEBI" id="CHEBI:59789"/>
    </ligand>
</feature>
<feature type="binding site" evidence="1">
    <location>
        <position position="108"/>
    </location>
    <ligand>
        <name>S-adenosyl-L-methionine</name>
        <dbReference type="ChEBI" id="CHEBI:59789"/>
    </ligand>
</feature>
<gene>
    <name evidence="1" type="primary">rlmE</name>
    <name evidence="1" type="synonym">rrmJ</name>
    <name type="ordered locus">Mboo_1391</name>
</gene>
<reference key="1">
    <citation type="journal article" date="2015" name="Microbiology">
        <title>Genome of Methanoregula boonei 6A8 reveals adaptations to oligotrophic peatland environments.</title>
        <authorList>
            <person name="Braeuer S."/>
            <person name="Cadillo-Quiroz H."/>
            <person name="Kyrpides N."/>
            <person name="Woyke T."/>
            <person name="Goodwin L."/>
            <person name="Detter C."/>
            <person name="Podell S."/>
            <person name="Yavitt J.B."/>
            <person name="Zinder S.H."/>
        </authorList>
    </citation>
    <scope>NUCLEOTIDE SEQUENCE [LARGE SCALE GENOMIC DNA]</scope>
    <source>
        <strain>DSM 21154 / JCM 14090 / 6A8</strain>
    </source>
</reference>
<proteinExistence type="inferred from homology"/>
<comment type="function">
    <text evidence="1">Specifically methylates the uridine in position 2552 of 23S rRNA at the 2'-O position of the ribose in the fully assembled 50S ribosomal subunit.</text>
</comment>
<comment type="catalytic activity">
    <reaction evidence="1">
        <text>uridine(2552) in 23S rRNA + S-adenosyl-L-methionine = 2'-O-methyluridine(2552) in 23S rRNA + S-adenosyl-L-homocysteine + H(+)</text>
        <dbReference type="Rhea" id="RHEA:42720"/>
        <dbReference type="Rhea" id="RHEA-COMP:10202"/>
        <dbReference type="Rhea" id="RHEA-COMP:10203"/>
        <dbReference type="ChEBI" id="CHEBI:15378"/>
        <dbReference type="ChEBI" id="CHEBI:57856"/>
        <dbReference type="ChEBI" id="CHEBI:59789"/>
        <dbReference type="ChEBI" id="CHEBI:65315"/>
        <dbReference type="ChEBI" id="CHEBI:74478"/>
        <dbReference type="EC" id="2.1.1.166"/>
    </reaction>
</comment>
<comment type="subcellular location">
    <subcellularLocation>
        <location evidence="1">Cytoplasm</location>
    </subcellularLocation>
</comment>
<comment type="similarity">
    <text evidence="1">Belongs to the class I-like SAM-binding methyltransferase superfamily. RNA methyltransferase RlmE family.</text>
</comment>
<accession>A7I848</accession>
<protein>
    <recommendedName>
        <fullName evidence="1">Ribosomal RNA large subunit methyltransferase E</fullName>
        <ecNumber evidence="1">2.1.1.166</ecNumber>
    </recommendedName>
    <alternativeName>
        <fullName evidence="1">23S rRNA Um2552 methyltransferase</fullName>
    </alternativeName>
    <alternativeName>
        <fullName evidence="1">rRNA (uridine-2'-O-)-methyltransferase</fullName>
    </alternativeName>
</protein>
<name>RLME_METB6</name>